<name>PEPE_SALHS</name>
<dbReference type="EC" id="3.4.13.21" evidence="1"/>
<dbReference type="EMBL" id="CP001120">
    <property type="protein sequence ID" value="ACF68097.1"/>
    <property type="molecule type" value="Genomic_DNA"/>
</dbReference>
<dbReference type="RefSeq" id="WP_000421776.1">
    <property type="nucleotide sequence ID" value="NC_011083.1"/>
</dbReference>
<dbReference type="SMR" id="B4TDG7"/>
<dbReference type="MEROPS" id="S51.001"/>
<dbReference type="KEGG" id="seh:SeHA_C4525"/>
<dbReference type="HOGENOM" id="CLU_071689_0_0_6"/>
<dbReference type="Proteomes" id="UP000001866">
    <property type="component" value="Chromosome"/>
</dbReference>
<dbReference type="GO" id="GO:0005737">
    <property type="term" value="C:cytoplasm"/>
    <property type="evidence" value="ECO:0007669"/>
    <property type="project" value="UniProtKB-SubCell"/>
</dbReference>
<dbReference type="GO" id="GO:0016805">
    <property type="term" value="F:dipeptidase activity"/>
    <property type="evidence" value="ECO:0007669"/>
    <property type="project" value="UniProtKB-UniRule"/>
</dbReference>
<dbReference type="GO" id="GO:0008236">
    <property type="term" value="F:serine-type peptidase activity"/>
    <property type="evidence" value="ECO:0007669"/>
    <property type="project" value="UniProtKB-KW"/>
</dbReference>
<dbReference type="GO" id="GO:0006508">
    <property type="term" value="P:proteolysis"/>
    <property type="evidence" value="ECO:0007669"/>
    <property type="project" value="UniProtKB-UniRule"/>
</dbReference>
<dbReference type="CDD" id="cd03146">
    <property type="entry name" value="GAT1_Peptidase_E"/>
    <property type="match status" value="1"/>
</dbReference>
<dbReference type="FunFam" id="3.40.50.880:FF:000007">
    <property type="entry name" value="Peptidase E"/>
    <property type="match status" value="1"/>
</dbReference>
<dbReference type="Gene3D" id="3.40.50.880">
    <property type="match status" value="1"/>
</dbReference>
<dbReference type="HAMAP" id="MF_00510">
    <property type="entry name" value="Peptidase_E"/>
    <property type="match status" value="1"/>
</dbReference>
<dbReference type="InterPro" id="IPR029062">
    <property type="entry name" value="Class_I_gatase-like"/>
</dbReference>
<dbReference type="InterPro" id="IPR005320">
    <property type="entry name" value="Peptidase_S51"/>
</dbReference>
<dbReference type="InterPro" id="IPR023172">
    <property type="entry name" value="Peptidase_S51_dipeptidase-E"/>
</dbReference>
<dbReference type="NCBIfam" id="NF003642">
    <property type="entry name" value="PRK05282.1"/>
    <property type="match status" value="1"/>
</dbReference>
<dbReference type="PANTHER" id="PTHR20842:SF0">
    <property type="entry name" value="ALPHA-ASPARTYL DIPEPTIDASE"/>
    <property type="match status" value="1"/>
</dbReference>
<dbReference type="PANTHER" id="PTHR20842">
    <property type="entry name" value="PROTEASE S51 ALPHA-ASPARTYL DIPEPTIDASE"/>
    <property type="match status" value="1"/>
</dbReference>
<dbReference type="Pfam" id="PF03575">
    <property type="entry name" value="Peptidase_S51"/>
    <property type="match status" value="1"/>
</dbReference>
<dbReference type="SUPFAM" id="SSF52317">
    <property type="entry name" value="Class I glutamine amidotransferase-like"/>
    <property type="match status" value="1"/>
</dbReference>
<proteinExistence type="inferred from homology"/>
<reference key="1">
    <citation type="journal article" date="2011" name="J. Bacteriol.">
        <title>Comparative genomics of 28 Salmonella enterica isolates: evidence for CRISPR-mediated adaptive sublineage evolution.</title>
        <authorList>
            <person name="Fricke W.F."/>
            <person name="Mammel M.K."/>
            <person name="McDermott P.F."/>
            <person name="Tartera C."/>
            <person name="White D.G."/>
            <person name="Leclerc J.E."/>
            <person name="Ravel J."/>
            <person name="Cebula T.A."/>
        </authorList>
    </citation>
    <scope>NUCLEOTIDE SEQUENCE [LARGE SCALE GENOMIC DNA]</scope>
    <source>
        <strain>SL476</strain>
    </source>
</reference>
<protein>
    <recommendedName>
        <fullName evidence="1">Peptidase E</fullName>
        <ecNumber evidence="1">3.4.13.21</ecNumber>
    </recommendedName>
    <alternativeName>
        <fullName evidence="1">Alpha-aspartyl dipeptidase</fullName>
    </alternativeName>
    <alternativeName>
        <fullName evidence="1">Asp-specific dipeptidase</fullName>
    </alternativeName>
    <alternativeName>
        <fullName evidence="1">Dipeptidase E</fullName>
    </alternativeName>
</protein>
<sequence length="229" mass="24783">MELLLLSNSTLPGKAWLEHALPLIANQLNGRRSAVFIPFAGVTQTWDEYTDKTAEVLAPLGINVTGIHRVADPLAAIEKAEIIIVGGGNTFQLLKESRERGLLAPMADRVKRGALYIGWSAGANLACPTIRTTNDMPIVDPNGFDALDLFPLQINPHFTNALPEGHKGETREQRIRELLVVAPELTVIGLPEGNWIQVSNGQAVLGGPNTTWVFKAGEEAVALEAGHRF</sequence>
<comment type="function">
    <text evidence="1">Hydrolyzes dipeptides containing N-terminal aspartate residues. May play a role in allowing the cell to use peptide aspartate to spare carbon otherwise required for the synthesis of the aspartate family of amino acids.</text>
</comment>
<comment type="catalytic activity">
    <reaction evidence="1">
        <text>Dipeptidase E catalyzes the hydrolysis of dipeptides Asp-|-Xaa. It does not act on peptides with N-terminal Glu, Asn or Gln, nor does it cleave isoaspartyl peptides.</text>
        <dbReference type="EC" id="3.4.13.21"/>
    </reaction>
</comment>
<comment type="subcellular location">
    <subcellularLocation>
        <location evidence="1">Cytoplasm</location>
    </subcellularLocation>
</comment>
<comment type="similarity">
    <text evidence="1">Belongs to the peptidase S51 family.</text>
</comment>
<organism>
    <name type="scientific">Salmonella heidelberg (strain SL476)</name>
    <dbReference type="NCBI Taxonomy" id="454169"/>
    <lineage>
        <taxon>Bacteria</taxon>
        <taxon>Pseudomonadati</taxon>
        <taxon>Pseudomonadota</taxon>
        <taxon>Gammaproteobacteria</taxon>
        <taxon>Enterobacterales</taxon>
        <taxon>Enterobacteriaceae</taxon>
        <taxon>Salmonella</taxon>
    </lineage>
</organism>
<keyword id="KW-0963">Cytoplasm</keyword>
<keyword id="KW-0224">Dipeptidase</keyword>
<keyword id="KW-0378">Hydrolase</keyword>
<keyword id="KW-0645">Protease</keyword>
<keyword id="KW-0720">Serine protease</keyword>
<feature type="chain" id="PRO_1000127250" description="Peptidase E">
    <location>
        <begin position="1"/>
        <end position="229"/>
    </location>
</feature>
<feature type="active site" description="Charge relay system" evidence="1">
    <location>
        <position position="120"/>
    </location>
</feature>
<feature type="active site" description="Charge relay system" evidence="1">
    <location>
        <position position="135"/>
    </location>
</feature>
<feature type="active site" description="Charge relay system" evidence="1">
    <location>
        <position position="157"/>
    </location>
</feature>
<accession>B4TDG7</accession>
<evidence type="ECO:0000255" key="1">
    <source>
        <dbReference type="HAMAP-Rule" id="MF_00510"/>
    </source>
</evidence>
<gene>
    <name evidence="1" type="primary">pepE</name>
    <name type="ordered locus">SeHA_C4525</name>
</gene>